<feature type="chain" id="PRO_0000403915" description="Nucleoprotein">
    <location>
        <begin position="1"/>
        <end position="616"/>
    </location>
</feature>
<feature type="short sequence motif" description="Nuclear localization signal" evidence="3">
    <location>
        <begin position="230"/>
        <end position="233"/>
    </location>
</feature>
<feature type="short sequence motif" description="Nuclear localization signal" evidence="3">
    <location>
        <begin position="473"/>
        <end position="476"/>
    </location>
</feature>
<feature type="strand" evidence="8">
    <location>
        <begin position="7"/>
        <end position="11"/>
    </location>
</feature>
<feature type="strand" evidence="8">
    <location>
        <begin position="13"/>
        <end position="16"/>
    </location>
</feature>
<feature type="strand" evidence="8">
    <location>
        <begin position="18"/>
        <end position="24"/>
    </location>
</feature>
<feature type="strand" evidence="8">
    <location>
        <begin position="29"/>
        <end position="34"/>
    </location>
</feature>
<feature type="turn" evidence="8">
    <location>
        <begin position="42"/>
        <end position="44"/>
    </location>
</feature>
<feature type="helix" evidence="8">
    <location>
        <begin position="65"/>
        <end position="73"/>
    </location>
</feature>
<feature type="helix" evidence="8">
    <location>
        <begin position="89"/>
        <end position="107"/>
    </location>
</feature>
<feature type="helix" evidence="8">
    <location>
        <begin position="109"/>
        <end position="111"/>
    </location>
</feature>
<feature type="helix" evidence="8">
    <location>
        <begin position="135"/>
        <end position="155"/>
    </location>
</feature>
<feature type="turn" evidence="8">
    <location>
        <begin position="156"/>
        <end position="158"/>
    </location>
</feature>
<feature type="helix" evidence="8">
    <location>
        <begin position="161"/>
        <end position="164"/>
    </location>
</feature>
<feature type="helix" evidence="8">
    <location>
        <begin position="167"/>
        <end position="181"/>
    </location>
</feature>
<feature type="strand" evidence="8">
    <location>
        <begin position="202"/>
        <end position="207"/>
    </location>
</feature>
<feature type="strand" evidence="8">
    <location>
        <begin position="209"/>
        <end position="217"/>
    </location>
</feature>
<feature type="helix" evidence="8">
    <location>
        <begin position="219"/>
        <end position="229"/>
    </location>
</feature>
<feature type="turn" evidence="8">
    <location>
        <begin position="233"/>
        <end position="235"/>
    </location>
</feature>
<feature type="helix" evidence="8">
    <location>
        <begin position="246"/>
        <end position="262"/>
    </location>
</feature>
<feature type="helix" evidence="8">
    <location>
        <begin position="265"/>
        <end position="268"/>
    </location>
</feature>
<feature type="helix" evidence="8">
    <location>
        <begin position="272"/>
        <end position="277"/>
    </location>
</feature>
<feature type="helix" evidence="8">
    <location>
        <begin position="282"/>
        <end position="288"/>
    </location>
</feature>
<feature type="turn" evidence="8">
    <location>
        <begin position="289"/>
        <end position="292"/>
    </location>
</feature>
<feature type="helix" evidence="8">
    <location>
        <begin position="295"/>
        <end position="298"/>
    </location>
</feature>
<feature type="helix" evidence="8">
    <location>
        <begin position="302"/>
        <end position="304"/>
    </location>
</feature>
<feature type="helix" evidence="8">
    <location>
        <begin position="308"/>
        <end position="319"/>
    </location>
</feature>
<feature type="helix" evidence="8">
    <location>
        <begin position="327"/>
        <end position="339"/>
    </location>
</feature>
<feature type="helix" evidence="8">
    <location>
        <begin position="343"/>
        <end position="351"/>
    </location>
</feature>
<feature type="turn" evidence="8">
    <location>
        <begin position="359"/>
        <end position="361"/>
    </location>
</feature>
<feature type="helix" evidence="8">
    <location>
        <begin position="362"/>
        <end position="374"/>
    </location>
</feature>
<feature type="helix" evidence="8">
    <location>
        <begin position="387"/>
        <end position="395"/>
    </location>
</feature>
<feature type="strand" evidence="8">
    <location>
        <begin position="405"/>
        <end position="407"/>
    </location>
</feature>
<feature type="helix" evidence="8">
    <location>
        <begin position="410"/>
        <end position="418"/>
    </location>
</feature>
<feature type="strand" evidence="8">
    <location>
        <begin position="422"/>
        <end position="425"/>
    </location>
</feature>
<feature type="strand" evidence="8">
    <location>
        <begin position="427"/>
        <end position="429"/>
    </location>
</feature>
<feature type="helix" evidence="8">
    <location>
        <begin position="431"/>
        <end position="442"/>
    </location>
</feature>
<feature type="helix" evidence="8">
    <location>
        <begin position="450"/>
        <end position="456"/>
    </location>
</feature>
<feature type="helix" evidence="8">
    <location>
        <begin position="464"/>
        <end position="466"/>
    </location>
</feature>
<feature type="strand" evidence="8">
    <location>
        <begin position="481"/>
        <end position="484"/>
    </location>
</feature>
<feature type="strand" evidence="8">
    <location>
        <begin position="510"/>
        <end position="512"/>
    </location>
</feature>
<feature type="strand" evidence="8">
    <location>
        <begin position="519"/>
        <end position="521"/>
    </location>
</feature>
<feature type="helix" evidence="8">
    <location>
        <begin position="523"/>
        <end position="529"/>
    </location>
</feature>
<feature type="helix" evidence="8">
    <location>
        <begin position="543"/>
        <end position="557"/>
    </location>
</feature>
<feature type="strand" evidence="8">
    <location>
        <begin position="561"/>
        <end position="567"/>
    </location>
</feature>
<feature type="strand" evidence="8">
    <location>
        <begin position="570"/>
        <end position="576"/>
    </location>
</feature>
<sequence>MADKGMTYSFDVRDNTLVVRRSTATKSGIKISYREDRGTSLLQKAFAGTEDEFWVELDQDVYVDKKIREFLVEEKMKDMSTRVSGAVAAAIERSVEFDNFSKEAAANIEMAGVDDEEAGGSGLVDNRRKNKGVSNMAYNLSLFIGMVFPALTTFFSAILSEGEMSIWQNGQAIMRILALADEDGKRQTRTGGQRVDMADVTKLNVVTANGKVKQVEVNLNDLKAAFRQSRPKRSDYRKGQGSKATESSISNQCMALIMKSVLSADQLFAPGVKMMRTNGFNASYTTLAEGANIPSKYLRHMRNCGGVALDLMGMKRIKNSPEGAKSKIFSIIQKKVRGRCRTEEQRLLTSALKISDGENKFQRIMDTLCTSFLIDPPRTTKCFIPPISSLMMYIQEGNSVLAMDFMKNGEDACKICREAKLKVGVNSTFTMSVARTCVAVSMVATAFCSADIIENAVPGSERYRSNIKANTTKPKKDSTYTIQGLRLSNVRYEARPETSQSNTDRSWQVNVTDSFGGLAVFNQGAIREMLGDGTSETTSVNVRALVKRILKSASERSARAVKTFMVGEQGKSAIVISGVGLFSIDFEGVEEAERITDMTPEIEFDEDDEEEEDIDI</sequence>
<gene>
    <name evidence="6" type="primary">Segment-3</name>
</gene>
<protein>
    <recommendedName>
        <fullName evidence="5">Nucleoprotein</fullName>
        <shortName>NP</shortName>
    </recommendedName>
    <alternativeName>
        <fullName>Nucleocapsid protein</fullName>
        <shortName>Protein N</shortName>
    </alternativeName>
    <alternativeName>
        <fullName>vp66</fullName>
    </alternativeName>
</protein>
<comment type="function">
    <text evidence="3 7">Encapsidates the negative strand viral RNA, protecting it from nucleases (Probable). The encapsidated genomic RNA is termed the ribonucleoprotein (RNP) and serves as template for transcription and replication (PubMed:15522447).</text>
</comment>
<comment type="subunit">
    <text evidence="1">Homomultimerizes to form the nucleocapsid. Binds to viral genomic RNA. Protein-RNA contacts are mediated by a combination of electrostatic interactions between positively charged residues and the phosphate backbone and planar interactions between aromatic side chains and bases (By similarity).</text>
</comment>
<comment type="subcellular location">
    <subcellularLocation>
        <location evidence="2">Virion</location>
    </subcellularLocation>
    <subcellularLocation>
        <location evidence="3">Host nucleus</location>
    </subcellularLocation>
    <subcellularLocation>
        <location evidence="4">Host nucleus</location>
        <location evidence="4">Host nucleolus</location>
    </subcellularLocation>
</comment>
<dbReference type="EMBL" id="AF404345">
    <property type="protein sequence ID" value="AAL67961.1"/>
    <property type="molecule type" value="Viral_cRNA"/>
</dbReference>
<dbReference type="PDB" id="4EWC">
    <property type="method" value="X-ray"/>
    <property type="resolution" value="2.70 A"/>
    <property type="chains" value="A=2-600"/>
</dbReference>
<dbReference type="PDBsum" id="4EWC"/>
<dbReference type="SMR" id="Q8V3T7"/>
<dbReference type="KEGG" id="vg:71004595"/>
<dbReference type="Proteomes" id="UP000008772">
    <property type="component" value="Genome"/>
</dbReference>
<dbReference type="GO" id="GO:0019029">
    <property type="term" value="C:helical viral capsid"/>
    <property type="evidence" value="ECO:0007669"/>
    <property type="project" value="UniProtKB-KW"/>
</dbReference>
<dbReference type="GO" id="GO:0043657">
    <property type="term" value="C:host cell"/>
    <property type="evidence" value="ECO:0007669"/>
    <property type="project" value="GOC"/>
</dbReference>
<dbReference type="GO" id="GO:0044196">
    <property type="term" value="C:host cell nucleolus"/>
    <property type="evidence" value="ECO:0007669"/>
    <property type="project" value="UniProtKB-SubCell"/>
</dbReference>
<dbReference type="GO" id="GO:0019013">
    <property type="term" value="C:viral nucleocapsid"/>
    <property type="evidence" value="ECO:0007669"/>
    <property type="project" value="UniProtKB-KW"/>
</dbReference>
<dbReference type="GO" id="GO:0046718">
    <property type="term" value="P:symbiont entry into host cell"/>
    <property type="evidence" value="ECO:0007669"/>
    <property type="project" value="UniProtKB-KW"/>
</dbReference>
<dbReference type="GO" id="GO:0075732">
    <property type="term" value="P:viral penetration into host nucleus"/>
    <property type="evidence" value="ECO:0007669"/>
    <property type="project" value="UniProtKB-KW"/>
</dbReference>
<dbReference type="Gene3D" id="1.20.120.1660">
    <property type="match status" value="1"/>
</dbReference>
<dbReference type="Gene3D" id="2.20.25.560">
    <property type="match status" value="1"/>
</dbReference>
<dbReference type="InterPro" id="IPR048894">
    <property type="entry name" value="NCAP_ISAV_C"/>
</dbReference>
<dbReference type="InterPro" id="IPR049060">
    <property type="entry name" value="NCAP_ISAV_hel"/>
</dbReference>
<dbReference type="InterPro" id="IPR049057">
    <property type="entry name" value="NCAP_ISAV_N"/>
</dbReference>
<dbReference type="Pfam" id="PF21453">
    <property type="entry name" value="NCAP_ISAV_hel"/>
    <property type="match status" value="1"/>
</dbReference>
<dbReference type="Pfam" id="PF21451">
    <property type="entry name" value="NCAP_ISAV_N"/>
    <property type="match status" value="1"/>
</dbReference>
<dbReference type="Pfam" id="PF21422">
    <property type="entry name" value="NP_C_Orthomyx"/>
    <property type="match status" value="1"/>
</dbReference>
<reference key="1">
    <citation type="journal article" date="2002" name="J. Gen. Virol.">
        <title>Genomic organization of infectious salmon anaemia virus.</title>
        <authorList>
            <person name="Clouthier S.C."/>
            <person name="Rector T."/>
            <person name="Brown N.E."/>
            <person name="Anderson E.D."/>
        </authorList>
    </citation>
    <scope>NUCLEOTIDE SEQUENCE [GENOMIC RNA]</scope>
</reference>
<reference key="2">
    <citation type="journal article" date="2004" name="J. Virol.">
        <title>Identification and characterization of viral structural proteins of infectious salmon anemia virus.</title>
        <authorList>
            <person name="Falk K."/>
            <person name="Aspehaug V."/>
            <person name="Vlasak R."/>
            <person name="Endresen C."/>
        </authorList>
    </citation>
    <scope>SUBCELLULAR LOCATION</scope>
</reference>
<reference key="3">
    <citation type="journal article" date="2004" name="Virus Res.">
        <title>Infectious salmon anemia virus (ISAV) genomic segment 3 encodes the viral nucleoprotein (NP), an RNA-binding protein with two monopartite nuclear localization signals (NLS).</title>
        <authorList>
            <person name="Aspehaug V."/>
            <person name="Falk K."/>
            <person name="Krossoy B."/>
            <person name="Thevarajan J."/>
            <person name="Sanders L."/>
            <person name="Moore L."/>
            <person name="Endresen C."/>
            <person name="Biering E."/>
        </authorList>
    </citation>
    <scope>FUNCTION</scope>
    <scope>SUBCELLULAR LOCATION</scope>
</reference>
<reference key="4">
    <citation type="journal article" date="2008" name="Virology">
        <title>The nucleoprotein and the viral RNA of infectious salmon anemia virus (ISAV) are localized in the nucleolus of infected cells.</title>
        <authorList>
            <person name="Goic B."/>
            <person name="Bustamante J."/>
            <person name="Miquel A."/>
            <person name="Alvarez M."/>
            <person name="Vera M.I."/>
            <person name="Valenzuela P.D."/>
            <person name="Burzio L.O."/>
        </authorList>
    </citation>
    <scope>SUBCELLULAR LOCATION</scope>
</reference>
<reference key="5">
    <citation type="journal article" date="2011" name="Virus Res.">
        <title>Infectious salmon anemia virus--genetics and pathogenesis.</title>
        <authorList>
            <person name="Cottet L."/>
            <person name="Rivas-Aravena A."/>
            <person name="Cortez-San Martin M."/>
            <person name="Sandino A.M."/>
            <person name="Spencer E."/>
        </authorList>
    </citation>
    <scope>REVIEW</scope>
</reference>
<proteinExistence type="evidence at protein level"/>
<evidence type="ECO:0000250" key="1"/>
<evidence type="ECO:0000269" key="2">
    <source>
    </source>
</evidence>
<evidence type="ECO:0000269" key="3">
    <source>
    </source>
</evidence>
<evidence type="ECO:0000269" key="4">
    <source>
    </source>
</evidence>
<evidence type="ECO:0000303" key="5">
    <source>
    </source>
</evidence>
<evidence type="ECO:0000303" key="6">
    <source>
    </source>
</evidence>
<evidence type="ECO:0000305" key="7"/>
<evidence type="ECO:0007829" key="8">
    <source>
        <dbReference type="PDB" id="4EWC"/>
    </source>
</evidence>
<accession>Q8V3T7</accession>
<organismHost>
    <name type="scientific">Gadus morhua</name>
    <name type="common">Atlantic cod</name>
    <dbReference type="NCBI Taxonomy" id="8049"/>
</organismHost>
<organismHost>
    <name type="scientific">Oncorhynchus kisutch</name>
    <name type="common">Coho salmon</name>
    <name type="synonym">Salmo kisutch</name>
    <dbReference type="NCBI Taxonomy" id="8019"/>
</organismHost>
<organismHost>
    <name type="scientific">Oncorhynchus mykiss</name>
    <name type="common">Rainbow trout</name>
    <name type="synonym">Salmo gairdneri</name>
    <dbReference type="NCBI Taxonomy" id="8022"/>
</organismHost>
<organismHost>
    <name type="scientific">Pollachius virens</name>
    <name type="common">Saithe</name>
    <name type="synonym">Gadus virens</name>
    <dbReference type="NCBI Taxonomy" id="8060"/>
</organismHost>
<organismHost>
    <name type="scientific">Salmo salar</name>
    <name type="common">Atlantic salmon</name>
    <dbReference type="NCBI Taxonomy" id="8030"/>
</organismHost>
<organismHost>
    <name type="scientific">Salmo trutta</name>
    <name type="common">Brown trout</name>
    <dbReference type="NCBI Taxonomy" id="8032"/>
</organismHost>
<organism>
    <name type="scientific">Infectious salmon anemia virus (isolate Atlantic salmon/Norway/810/9/99)</name>
    <name type="common">ISAV</name>
    <dbReference type="NCBI Taxonomy" id="652965"/>
    <lineage>
        <taxon>Viruses</taxon>
        <taxon>Riboviria</taxon>
        <taxon>Orthornavirae</taxon>
        <taxon>Negarnaviricota</taxon>
        <taxon>Polyploviricotina</taxon>
        <taxon>Insthoviricetes</taxon>
        <taxon>Articulavirales</taxon>
        <taxon>Orthomyxoviridae</taxon>
        <taxon>Isavirus</taxon>
        <taxon>Isavirus salaris</taxon>
    </lineage>
</organism>
<name>NCAP_ISAV8</name>
<keyword id="KW-0002">3D-structure</keyword>
<keyword id="KW-0167">Capsid protein</keyword>
<keyword id="KW-1139">Helical capsid protein</keyword>
<keyword id="KW-1048">Host nucleus</keyword>
<keyword id="KW-1185">Reference proteome</keyword>
<keyword id="KW-0543">Viral nucleoprotein</keyword>
<keyword id="KW-1163">Viral penetration into host nucleus</keyword>
<keyword id="KW-0946">Virion</keyword>
<keyword id="KW-1160">Virus entry into host cell</keyword>